<accession>Q11KK1</accession>
<sequence length="133" mass="15067">MARVKRGVTAHAKHKKVLKAAKGFYGRRKNTIRIAKQAVEKSLQYAYRDRKNRKRNFRALWIQRINAATREHGLTYGRFIDGLNKAGIEIDRKVLADMAVHEPQAFAALVAKSKASLEYLKNTTPNAFESAVA</sequence>
<evidence type="ECO:0000255" key="1">
    <source>
        <dbReference type="HAMAP-Rule" id="MF_00382"/>
    </source>
</evidence>
<evidence type="ECO:0000305" key="2"/>
<feature type="chain" id="PRO_1000049008" description="Large ribosomal subunit protein bL20">
    <location>
        <begin position="1"/>
        <end position="133"/>
    </location>
</feature>
<organism>
    <name type="scientific">Chelativorans sp. (strain BNC1)</name>
    <dbReference type="NCBI Taxonomy" id="266779"/>
    <lineage>
        <taxon>Bacteria</taxon>
        <taxon>Pseudomonadati</taxon>
        <taxon>Pseudomonadota</taxon>
        <taxon>Alphaproteobacteria</taxon>
        <taxon>Hyphomicrobiales</taxon>
        <taxon>Phyllobacteriaceae</taxon>
        <taxon>Chelativorans</taxon>
    </lineage>
</organism>
<reference key="1">
    <citation type="submission" date="2006-06" db="EMBL/GenBank/DDBJ databases">
        <title>Complete sequence of chromosome of Mesorhizobium sp. BNC1.</title>
        <authorList>
            <consortium name="US DOE Joint Genome Institute"/>
            <person name="Copeland A."/>
            <person name="Lucas S."/>
            <person name="Lapidus A."/>
            <person name="Barry K."/>
            <person name="Detter J.C."/>
            <person name="Glavina del Rio T."/>
            <person name="Hammon N."/>
            <person name="Israni S."/>
            <person name="Dalin E."/>
            <person name="Tice H."/>
            <person name="Pitluck S."/>
            <person name="Chertkov O."/>
            <person name="Brettin T."/>
            <person name="Bruce D."/>
            <person name="Han C."/>
            <person name="Tapia R."/>
            <person name="Gilna P."/>
            <person name="Schmutz J."/>
            <person name="Larimer F."/>
            <person name="Land M."/>
            <person name="Hauser L."/>
            <person name="Kyrpides N."/>
            <person name="Mikhailova N."/>
            <person name="Richardson P."/>
        </authorList>
    </citation>
    <scope>NUCLEOTIDE SEQUENCE [LARGE SCALE GENOMIC DNA]</scope>
    <source>
        <strain>BNC1</strain>
    </source>
</reference>
<gene>
    <name evidence="1" type="primary">rplT</name>
    <name type="ordered locus">Meso_0674</name>
</gene>
<dbReference type="EMBL" id="CP000390">
    <property type="protein sequence ID" value="ABG62074.1"/>
    <property type="molecule type" value="Genomic_DNA"/>
</dbReference>
<dbReference type="SMR" id="Q11KK1"/>
<dbReference type="STRING" id="266779.Meso_0674"/>
<dbReference type="KEGG" id="mes:Meso_0674"/>
<dbReference type="eggNOG" id="COG0292">
    <property type="taxonomic scope" value="Bacteria"/>
</dbReference>
<dbReference type="HOGENOM" id="CLU_123265_0_1_5"/>
<dbReference type="OrthoDB" id="9808966at2"/>
<dbReference type="GO" id="GO:1990904">
    <property type="term" value="C:ribonucleoprotein complex"/>
    <property type="evidence" value="ECO:0007669"/>
    <property type="project" value="UniProtKB-KW"/>
</dbReference>
<dbReference type="GO" id="GO:0005840">
    <property type="term" value="C:ribosome"/>
    <property type="evidence" value="ECO:0007669"/>
    <property type="project" value="UniProtKB-KW"/>
</dbReference>
<dbReference type="GO" id="GO:0019843">
    <property type="term" value="F:rRNA binding"/>
    <property type="evidence" value="ECO:0007669"/>
    <property type="project" value="UniProtKB-UniRule"/>
</dbReference>
<dbReference type="GO" id="GO:0003735">
    <property type="term" value="F:structural constituent of ribosome"/>
    <property type="evidence" value="ECO:0007669"/>
    <property type="project" value="InterPro"/>
</dbReference>
<dbReference type="GO" id="GO:0000027">
    <property type="term" value="P:ribosomal large subunit assembly"/>
    <property type="evidence" value="ECO:0007669"/>
    <property type="project" value="UniProtKB-UniRule"/>
</dbReference>
<dbReference type="GO" id="GO:0006412">
    <property type="term" value="P:translation"/>
    <property type="evidence" value="ECO:0007669"/>
    <property type="project" value="InterPro"/>
</dbReference>
<dbReference type="CDD" id="cd07026">
    <property type="entry name" value="Ribosomal_L20"/>
    <property type="match status" value="1"/>
</dbReference>
<dbReference type="FunFam" id="1.10.1900.20:FF:000001">
    <property type="entry name" value="50S ribosomal protein L20"/>
    <property type="match status" value="1"/>
</dbReference>
<dbReference type="Gene3D" id="6.10.160.10">
    <property type="match status" value="1"/>
</dbReference>
<dbReference type="Gene3D" id="1.10.1900.20">
    <property type="entry name" value="Ribosomal protein L20"/>
    <property type="match status" value="1"/>
</dbReference>
<dbReference type="HAMAP" id="MF_00382">
    <property type="entry name" value="Ribosomal_bL20"/>
    <property type="match status" value="1"/>
</dbReference>
<dbReference type="InterPro" id="IPR005813">
    <property type="entry name" value="Ribosomal_bL20"/>
</dbReference>
<dbReference type="InterPro" id="IPR049946">
    <property type="entry name" value="RIBOSOMAL_L20_CS"/>
</dbReference>
<dbReference type="InterPro" id="IPR035566">
    <property type="entry name" value="Ribosomal_protein_bL20_C"/>
</dbReference>
<dbReference type="NCBIfam" id="TIGR01032">
    <property type="entry name" value="rplT_bact"/>
    <property type="match status" value="1"/>
</dbReference>
<dbReference type="PANTHER" id="PTHR10986">
    <property type="entry name" value="39S RIBOSOMAL PROTEIN L20"/>
    <property type="match status" value="1"/>
</dbReference>
<dbReference type="Pfam" id="PF00453">
    <property type="entry name" value="Ribosomal_L20"/>
    <property type="match status" value="1"/>
</dbReference>
<dbReference type="PRINTS" id="PR00062">
    <property type="entry name" value="RIBOSOMALL20"/>
</dbReference>
<dbReference type="SUPFAM" id="SSF74731">
    <property type="entry name" value="Ribosomal protein L20"/>
    <property type="match status" value="1"/>
</dbReference>
<dbReference type="PROSITE" id="PS00937">
    <property type="entry name" value="RIBOSOMAL_L20"/>
    <property type="match status" value="1"/>
</dbReference>
<name>RL20_CHESB</name>
<comment type="function">
    <text evidence="1">Binds directly to 23S ribosomal RNA and is necessary for the in vitro assembly process of the 50S ribosomal subunit. It is not involved in the protein synthesizing functions of that subunit.</text>
</comment>
<comment type="similarity">
    <text evidence="1">Belongs to the bacterial ribosomal protein bL20 family.</text>
</comment>
<keyword id="KW-0687">Ribonucleoprotein</keyword>
<keyword id="KW-0689">Ribosomal protein</keyword>
<keyword id="KW-0694">RNA-binding</keyword>
<keyword id="KW-0699">rRNA-binding</keyword>
<protein>
    <recommendedName>
        <fullName evidence="1">Large ribosomal subunit protein bL20</fullName>
    </recommendedName>
    <alternativeName>
        <fullName evidence="2">50S ribosomal protein L20</fullName>
    </alternativeName>
</protein>
<proteinExistence type="inferred from homology"/>